<protein>
    <recommendedName>
        <fullName evidence="1">UPF0391 membrane protein RPA3505</fullName>
    </recommendedName>
</protein>
<dbReference type="EMBL" id="BX572604">
    <property type="protein sequence ID" value="CAE28946.1"/>
    <property type="molecule type" value="Genomic_DNA"/>
</dbReference>
<dbReference type="RefSeq" id="WP_011159045.1">
    <property type="nucleotide sequence ID" value="NZ_CP116810.1"/>
</dbReference>
<dbReference type="STRING" id="258594.RPA3505"/>
<dbReference type="GeneID" id="66894605"/>
<dbReference type="eggNOG" id="COG5487">
    <property type="taxonomic scope" value="Bacteria"/>
</dbReference>
<dbReference type="HOGENOM" id="CLU_187346_2_1_5"/>
<dbReference type="GO" id="GO:0005886">
    <property type="term" value="C:plasma membrane"/>
    <property type="evidence" value="ECO:0007669"/>
    <property type="project" value="UniProtKB-SubCell"/>
</dbReference>
<dbReference type="HAMAP" id="MF_01361">
    <property type="entry name" value="UPF0391"/>
    <property type="match status" value="1"/>
</dbReference>
<dbReference type="InterPro" id="IPR009760">
    <property type="entry name" value="DUF1328"/>
</dbReference>
<dbReference type="NCBIfam" id="NF010228">
    <property type="entry name" value="PRK13682.1-3"/>
    <property type="match status" value="1"/>
</dbReference>
<dbReference type="NCBIfam" id="NF010229">
    <property type="entry name" value="PRK13682.1-4"/>
    <property type="match status" value="1"/>
</dbReference>
<dbReference type="Pfam" id="PF07043">
    <property type="entry name" value="DUF1328"/>
    <property type="match status" value="1"/>
</dbReference>
<dbReference type="PIRSF" id="PIRSF036466">
    <property type="entry name" value="UCP036466"/>
    <property type="match status" value="1"/>
</dbReference>
<comment type="subcellular location">
    <subcellularLocation>
        <location evidence="1">Cell membrane</location>
        <topology evidence="1">Multi-pass membrane protein</topology>
    </subcellularLocation>
</comment>
<comment type="similarity">
    <text evidence="1">Belongs to the UPF0391 family.</text>
</comment>
<name>Y3505_RHOPA</name>
<gene>
    <name type="ordered locus">RPA3505</name>
</gene>
<sequence>MLGWVVTFLVVALIAGLLGFGGIAGASIEIAKIIFFIAIVLFLVSAVISIFRGRTRV</sequence>
<evidence type="ECO:0000255" key="1">
    <source>
        <dbReference type="HAMAP-Rule" id="MF_01361"/>
    </source>
</evidence>
<organism>
    <name type="scientific">Rhodopseudomonas palustris (strain ATCC BAA-98 / CGA009)</name>
    <dbReference type="NCBI Taxonomy" id="258594"/>
    <lineage>
        <taxon>Bacteria</taxon>
        <taxon>Pseudomonadati</taxon>
        <taxon>Pseudomonadota</taxon>
        <taxon>Alphaproteobacteria</taxon>
        <taxon>Hyphomicrobiales</taxon>
        <taxon>Nitrobacteraceae</taxon>
        <taxon>Rhodopseudomonas</taxon>
    </lineage>
</organism>
<keyword id="KW-1003">Cell membrane</keyword>
<keyword id="KW-0472">Membrane</keyword>
<keyword id="KW-0812">Transmembrane</keyword>
<keyword id="KW-1133">Transmembrane helix</keyword>
<accession>Q6N435</accession>
<feature type="chain" id="PRO_0000256777" description="UPF0391 membrane protein RPA3505">
    <location>
        <begin position="1"/>
        <end position="57"/>
    </location>
</feature>
<feature type="transmembrane region" description="Helical" evidence="1">
    <location>
        <begin position="4"/>
        <end position="24"/>
    </location>
</feature>
<feature type="transmembrane region" description="Helical" evidence="1">
    <location>
        <begin position="30"/>
        <end position="50"/>
    </location>
</feature>
<reference key="1">
    <citation type="journal article" date="2004" name="Nat. Biotechnol.">
        <title>Complete genome sequence of the metabolically versatile photosynthetic bacterium Rhodopseudomonas palustris.</title>
        <authorList>
            <person name="Larimer F.W."/>
            <person name="Chain P."/>
            <person name="Hauser L."/>
            <person name="Lamerdin J.E."/>
            <person name="Malfatti S."/>
            <person name="Do L."/>
            <person name="Land M.L."/>
            <person name="Pelletier D.A."/>
            <person name="Beatty J.T."/>
            <person name="Lang A.S."/>
            <person name="Tabita F.R."/>
            <person name="Gibson J.L."/>
            <person name="Hanson T.E."/>
            <person name="Bobst C."/>
            <person name="Torres y Torres J.L."/>
            <person name="Peres C."/>
            <person name="Harrison F.H."/>
            <person name="Gibson J."/>
            <person name="Harwood C.S."/>
        </authorList>
    </citation>
    <scope>NUCLEOTIDE SEQUENCE [LARGE SCALE GENOMIC DNA]</scope>
    <source>
        <strain>ATCC BAA-98 / CGA009</strain>
    </source>
</reference>
<proteinExistence type="inferred from homology"/>